<keyword id="KW-1185">Reference proteome</keyword>
<keyword id="KW-0687">Ribonucleoprotein</keyword>
<keyword id="KW-0689">Ribosomal protein</keyword>
<name>RL28_KOSOT</name>
<dbReference type="EMBL" id="CP001634">
    <property type="protein sequence ID" value="ACR80349.1"/>
    <property type="molecule type" value="Genomic_DNA"/>
</dbReference>
<dbReference type="RefSeq" id="WP_015868994.1">
    <property type="nucleotide sequence ID" value="NC_012785.1"/>
</dbReference>
<dbReference type="SMR" id="C5CFE0"/>
<dbReference type="STRING" id="521045.Kole_1660"/>
<dbReference type="KEGG" id="kol:Kole_1660"/>
<dbReference type="eggNOG" id="COG0227">
    <property type="taxonomic scope" value="Bacteria"/>
</dbReference>
<dbReference type="HOGENOM" id="CLU_064548_7_0_0"/>
<dbReference type="OrthoDB" id="9805609at2"/>
<dbReference type="Proteomes" id="UP000002382">
    <property type="component" value="Chromosome"/>
</dbReference>
<dbReference type="GO" id="GO:1990904">
    <property type="term" value="C:ribonucleoprotein complex"/>
    <property type="evidence" value="ECO:0007669"/>
    <property type="project" value="UniProtKB-KW"/>
</dbReference>
<dbReference type="GO" id="GO:0005840">
    <property type="term" value="C:ribosome"/>
    <property type="evidence" value="ECO:0007669"/>
    <property type="project" value="UniProtKB-KW"/>
</dbReference>
<dbReference type="GO" id="GO:0003735">
    <property type="term" value="F:structural constituent of ribosome"/>
    <property type="evidence" value="ECO:0007669"/>
    <property type="project" value="InterPro"/>
</dbReference>
<dbReference type="GO" id="GO:0006412">
    <property type="term" value="P:translation"/>
    <property type="evidence" value="ECO:0007669"/>
    <property type="project" value="UniProtKB-UniRule"/>
</dbReference>
<dbReference type="Gene3D" id="2.20.150.30">
    <property type="match status" value="1"/>
</dbReference>
<dbReference type="Gene3D" id="2.30.170.40">
    <property type="entry name" value="Ribosomal protein L28/L24"/>
    <property type="match status" value="1"/>
</dbReference>
<dbReference type="HAMAP" id="MF_00373">
    <property type="entry name" value="Ribosomal_bL28"/>
    <property type="match status" value="1"/>
</dbReference>
<dbReference type="InterPro" id="IPR050096">
    <property type="entry name" value="Bacterial_rp_bL28"/>
</dbReference>
<dbReference type="InterPro" id="IPR026569">
    <property type="entry name" value="Ribosomal_bL28"/>
</dbReference>
<dbReference type="InterPro" id="IPR034704">
    <property type="entry name" value="Ribosomal_bL28/bL31-like_sf"/>
</dbReference>
<dbReference type="InterPro" id="IPR001383">
    <property type="entry name" value="Ribosomal_bL28_bact-type"/>
</dbReference>
<dbReference type="InterPro" id="IPR037147">
    <property type="entry name" value="Ribosomal_bL28_sf"/>
</dbReference>
<dbReference type="NCBIfam" id="TIGR00009">
    <property type="entry name" value="L28"/>
    <property type="match status" value="1"/>
</dbReference>
<dbReference type="PANTHER" id="PTHR39080">
    <property type="entry name" value="50S RIBOSOMAL PROTEIN L28"/>
    <property type="match status" value="1"/>
</dbReference>
<dbReference type="PANTHER" id="PTHR39080:SF1">
    <property type="entry name" value="LARGE RIBOSOMAL SUBUNIT PROTEIN BL28A"/>
    <property type="match status" value="1"/>
</dbReference>
<dbReference type="Pfam" id="PF00830">
    <property type="entry name" value="Ribosomal_L28"/>
    <property type="match status" value="1"/>
</dbReference>
<dbReference type="SUPFAM" id="SSF143800">
    <property type="entry name" value="L28p-like"/>
    <property type="match status" value="1"/>
</dbReference>
<evidence type="ECO:0000255" key="1">
    <source>
        <dbReference type="HAMAP-Rule" id="MF_00373"/>
    </source>
</evidence>
<evidence type="ECO:0000305" key="2"/>
<feature type="chain" id="PRO_1000205603" description="Large ribosomal subunit protein bL28">
    <location>
        <begin position="1"/>
        <end position="63"/>
    </location>
</feature>
<protein>
    <recommendedName>
        <fullName evidence="1">Large ribosomal subunit protein bL28</fullName>
    </recommendedName>
    <alternativeName>
        <fullName evidence="2">50S ribosomal protein L28</fullName>
    </alternativeName>
</protein>
<gene>
    <name evidence="1" type="primary">rpmB</name>
    <name type="ordered locus">Kole_1660</name>
</gene>
<accession>C5CFE0</accession>
<sequence length="63" mass="7141">MSKVCEICGKRPTTGNTVSHSNKKNKRWWKPNVQKVKVIVDGEVKKMRVCTKCLKAGKVQRAV</sequence>
<organism>
    <name type="scientific">Kosmotoga olearia (strain ATCC BAA-1733 / DSM 21960 / TBF 19.5.1)</name>
    <dbReference type="NCBI Taxonomy" id="521045"/>
    <lineage>
        <taxon>Bacteria</taxon>
        <taxon>Thermotogati</taxon>
        <taxon>Thermotogota</taxon>
        <taxon>Thermotogae</taxon>
        <taxon>Kosmotogales</taxon>
        <taxon>Kosmotogaceae</taxon>
        <taxon>Kosmotoga</taxon>
    </lineage>
</organism>
<proteinExistence type="inferred from homology"/>
<comment type="similarity">
    <text evidence="1">Belongs to the bacterial ribosomal protein bL28 family.</text>
</comment>
<reference key="1">
    <citation type="submission" date="2009-06" db="EMBL/GenBank/DDBJ databases">
        <title>Complete sequence of Thermotogales bacterium TBF 19.5.1.</title>
        <authorList>
            <consortium name="US DOE Joint Genome Institute"/>
            <person name="Lucas S."/>
            <person name="Copeland A."/>
            <person name="Lapidus A."/>
            <person name="Glavina del Rio T."/>
            <person name="Tice H."/>
            <person name="Bruce D."/>
            <person name="Goodwin L."/>
            <person name="Pitluck S."/>
            <person name="Chertkov O."/>
            <person name="Brettin T."/>
            <person name="Detter J.C."/>
            <person name="Han C."/>
            <person name="Schmutz J."/>
            <person name="Larimer F."/>
            <person name="Land M."/>
            <person name="Hauser L."/>
            <person name="Kyrpides N."/>
            <person name="Ovchinnikova G."/>
            <person name="Noll K."/>
        </authorList>
    </citation>
    <scope>NUCLEOTIDE SEQUENCE [LARGE SCALE GENOMIC DNA]</scope>
    <source>
        <strain>ATCC BAA-1733 / DSM 21960 / TBF 19.5.1</strain>
    </source>
</reference>